<comment type="function">
    <text evidence="1">Responsible for channeling the electrons from the oxidation of dihydroorotate from the FMN redox center in the PyrD type B subunit to the ultimate electron acceptor NAD(+).</text>
</comment>
<comment type="cofactor">
    <cofactor evidence="1">
        <name>[2Fe-2S] cluster</name>
        <dbReference type="ChEBI" id="CHEBI:190135"/>
    </cofactor>
    <text evidence="1">Binds 1 [2Fe-2S] cluster per subunit.</text>
</comment>
<comment type="cofactor">
    <cofactor evidence="1">
        <name>FAD</name>
        <dbReference type="ChEBI" id="CHEBI:57692"/>
    </cofactor>
    <text evidence="1">Binds 1 FAD per subunit.</text>
</comment>
<comment type="pathway">
    <text evidence="1">Pyrimidine metabolism; UMP biosynthesis via de novo pathway; orotate from (S)-dihydroorotate (NAD(+) route): step 1/1.</text>
</comment>
<comment type="subunit">
    <text evidence="1">Heterotetramer of 2 PyrK and 2 PyrD type B subunits.</text>
</comment>
<comment type="similarity">
    <text evidence="1">Belongs to the PyrK family.</text>
</comment>
<evidence type="ECO:0000255" key="1">
    <source>
        <dbReference type="HAMAP-Rule" id="MF_01211"/>
    </source>
</evidence>
<gene>
    <name evidence="1" type="primary">pyrK</name>
    <name type="synonym">ubiB4</name>
    <name type="ordered locus">TTE1531</name>
</gene>
<sequence length="247" mass="27603">MRWKMKARVLSNRRIASEVYEMTFEWKGKKPHPGQFLMIDCQGKTFLKRPFSVNDFEEEKMTILYQVRGEGTKNLSQMKEGDILEITGPHGNGFEILEGKRVLIVGGGVGIAPLLYLAKKVKAQKLYIALGFKRETFLVEKFEGLGEVVVTTEEGSTGRKGLVTSVVEEMIGEVDIVYGCGPKPMLKALQEISMKANVLCQISLEEKMACGIGACLGCACKVREDKGFSYKRVCRDGPVFWAEEVLF</sequence>
<proteinExistence type="inferred from homology"/>
<feature type="chain" id="PRO_0000148370" description="Dihydroorotate dehydrogenase B (NAD(+)), electron transfer subunit">
    <location>
        <begin position="1"/>
        <end position="247"/>
    </location>
</feature>
<feature type="domain" description="FAD-binding FR-type" evidence="1">
    <location>
        <begin position="2"/>
        <end position="96"/>
    </location>
</feature>
<feature type="binding site" evidence="1">
    <location>
        <begin position="49"/>
        <end position="52"/>
    </location>
    <ligand>
        <name>FAD</name>
        <dbReference type="ChEBI" id="CHEBI:57692"/>
    </ligand>
</feature>
<feature type="binding site" evidence="1">
    <location>
        <begin position="64"/>
        <end position="66"/>
    </location>
    <ligand>
        <name>FAD</name>
        <dbReference type="ChEBI" id="CHEBI:57692"/>
    </ligand>
</feature>
<feature type="binding site" evidence="1">
    <location>
        <begin position="71"/>
        <end position="72"/>
    </location>
    <ligand>
        <name>FAD</name>
        <dbReference type="ChEBI" id="CHEBI:57692"/>
    </ligand>
</feature>
<feature type="binding site" evidence="1">
    <location>
        <position position="210"/>
    </location>
    <ligand>
        <name>[2Fe-2S] cluster</name>
        <dbReference type="ChEBI" id="CHEBI:190135"/>
    </ligand>
</feature>
<feature type="binding site" evidence="1">
    <location>
        <position position="215"/>
    </location>
    <ligand>
        <name>[2Fe-2S] cluster</name>
        <dbReference type="ChEBI" id="CHEBI:190135"/>
    </ligand>
</feature>
<feature type="binding site" evidence="1">
    <location>
        <position position="218"/>
    </location>
    <ligand>
        <name>[2Fe-2S] cluster</name>
        <dbReference type="ChEBI" id="CHEBI:190135"/>
    </ligand>
</feature>
<feature type="binding site" evidence="1">
    <location>
        <position position="234"/>
    </location>
    <ligand>
        <name>[2Fe-2S] cluster</name>
        <dbReference type="ChEBI" id="CHEBI:190135"/>
    </ligand>
</feature>
<name>PYRK_CALS4</name>
<protein>
    <recommendedName>
        <fullName evidence="1">Dihydroorotate dehydrogenase B (NAD(+)), electron transfer subunit</fullName>
    </recommendedName>
    <alternativeName>
        <fullName evidence="1">Dihydroorotate oxidase B, electron transfer subunit</fullName>
    </alternativeName>
</protein>
<dbReference type="EMBL" id="AE008691">
    <property type="protein sequence ID" value="AAM24742.1"/>
    <property type="molecule type" value="Genomic_DNA"/>
</dbReference>
<dbReference type="SMR" id="P58885"/>
<dbReference type="STRING" id="273068.TTE1531"/>
<dbReference type="KEGG" id="tte:TTE1531"/>
<dbReference type="eggNOG" id="COG0543">
    <property type="taxonomic scope" value="Bacteria"/>
</dbReference>
<dbReference type="HOGENOM" id="CLU_003827_1_2_9"/>
<dbReference type="UniPathway" id="UPA00070">
    <property type="reaction ID" value="UER00945"/>
</dbReference>
<dbReference type="Proteomes" id="UP000000555">
    <property type="component" value="Chromosome"/>
</dbReference>
<dbReference type="GO" id="GO:0051537">
    <property type="term" value="F:2 iron, 2 sulfur cluster binding"/>
    <property type="evidence" value="ECO:0007669"/>
    <property type="project" value="UniProtKB-KW"/>
</dbReference>
<dbReference type="GO" id="GO:0009055">
    <property type="term" value="F:electron transfer activity"/>
    <property type="evidence" value="ECO:0007669"/>
    <property type="project" value="UniProtKB-UniRule"/>
</dbReference>
<dbReference type="GO" id="GO:0050660">
    <property type="term" value="F:flavin adenine dinucleotide binding"/>
    <property type="evidence" value="ECO:0007669"/>
    <property type="project" value="InterPro"/>
</dbReference>
<dbReference type="GO" id="GO:0046872">
    <property type="term" value="F:metal ion binding"/>
    <property type="evidence" value="ECO:0007669"/>
    <property type="project" value="UniProtKB-KW"/>
</dbReference>
<dbReference type="GO" id="GO:0016491">
    <property type="term" value="F:oxidoreductase activity"/>
    <property type="evidence" value="ECO:0007669"/>
    <property type="project" value="InterPro"/>
</dbReference>
<dbReference type="GO" id="GO:0044205">
    <property type="term" value="P:'de novo' UMP biosynthetic process"/>
    <property type="evidence" value="ECO:0007669"/>
    <property type="project" value="UniProtKB-UniRule"/>
</dbReference>
<dbReference type="CDD" id="cd06218">
    <property type="entry name" value="DHOD_e_trans"/>
    <property type="match status" value="1"/>
</dbReference>
<dbReference type="Gene3D" id="2.10.240.10">
    <property type="entry name" value="Dihydroorotate dehydrogenase, electron transfer subunit"/>
    <property type="match status" value="1"/>
</dbReference>
<dbReference type="Gene3D" id="3.40.50.80">
    <property type="entry name" value="Nucleotide-binding domain of ferredoxin-NADP reductase (FNR) module"/>
    <property type="match status" value="1"/>
</dbReference>
<dbReference type="Gene3D" id="2.40.30.10">
    <property type="entry name" value="Translation factors"/>
    <property type="match status" value="1"/>
</dbReference>
<dbReference type="HAMAP" id="MF_01211">
    <property type="entry name" value="DHODB_Fe_S_bind"/>
    <property type="match status" value="1"/>
</dbReference>
<dbReference type="InterPro" id="IPR012165">
    <property type="entry name" value="Cyt_c3_hydrogenase_gsu"/>
</dbReference>
<dbReference type="InterPro" id="IPR037117">
    <property type="entry name" value="Dihydroorotate_DH_ele_sf"/>
</dbReference>
<dbReference type="InterPro" id="IPR019480">
    <property type="entry name" value="Dihydroorotate_DH_Fe-S-bd"/>
</dbReference>
<dbReference type="InterPro" id="IPR023455">
    <property type="entry name" value="Dihydroorotate_DHASE_ETsu"/>
</dbReference>
<dbReference type="InterPro" id="IPR017927">
    <property type="entry name" value="FAD-bd_FR_type"/>
</dbReference>
<dbReference type="InterPro" id="IPR039261">
    <property type="entry name" value="FNR_nucleotide-bd"/>
</dbReference>
<dbReference type="InterPro" id="IPR050353">
    <property type="entry name" value="PyrK_electron_transfer"/>
</dbReference>
<dbReference type="InterPro" id="IPR017938">
    <property type="entry name" value="Riboflavin_synthase-like_b-brl"/>
</dbReference>
<dbReference type="NCBIfam" id="NF000798">
    <property type="entry name" value="PRK00054.1-3"/>
    <property type="match status" value="1"/>
</dbReference>
<dbReference type="PANTHER" id="PTHR43513">
    <property type="entry name" value="DIHYDROOROTATE DEHYDROGENASE B (NAD(+)), ELECTRON TRANSFER SUBUNIT"/>
    <property type="match status" value="1"/>
</dbReference>
<dbReference type="PANTHER" id="PTHR43513:SF3">
    <property type="entry name" value="DIHYDROOROTATE DEHYDROGENASE B (NAD(+)), ELECTRON TRANSFER SUBUNIT-RELATED"/>
    <property type="match status" value="1"/>
</dbReference>
<dbReference type="Pfam" id="PF10418">
    <property type="entry name" value="DHODB_Fe-S_bind"/>
    <property type="match status" value="1"/>
</dbReference>
<dbReference type="PIRSF" id="PIRSF006816">
    <property type="entry name" value="Cyc3_hyd_g"/>
    <property type="match status" value="1"/>
</dbReference>
<dbReference type="PRINTS" id="PR00409">
    <property type="entry name" value="PHDIOXRDTASE"/>
</dbReference>
<dbReference type="SUPFAM" id="SSF52343">
    <property type="entry name" value="Ferredoxin reductase-like, C-terminal NADP-linked domain"/>
    <property type="match status" value="1"/>
</dbReference>
<dbReference type="SUPFAM" id="SSF63380">
    <property type="entry name" value="Riboflavin synthase domain-like"/>
    <property type="match status" value="1"/>
</dbReference>
<dbReference type="PROSITE" id="PS51384">
    <property type="entry name" value="FAD_FR"/>
    <property type="match status" value="1"/>
</dbReference>
<accession>P58885</accession>
<reference key="1">
    <citation type="journal article" date="2002" name="Genome Res.">
        <title>A complete sequence of the T. tengcongensis genome.</title>
        <authorList>
            <person name="Bao Q."/>
            <person name="Tian Y."/>
            <person name="Li W."/>
            <person name="Xu Z."/>
            <person name="Xuan Z."/>
            <person name="Hu S."/>
            <person name="Dong W."/>
            <person name="Yang J."/>
            <person name="Chen Y."/>
            <person name="Xue Y."/>
            <person name="Xu Y."/>
            <person name="Lai X."/>
            <person name="Huang L."/>
            <person name="Dong X."/>
            <person name="Ma Y."/>
            <person name="Ling L."/>
            <person name="Tan H."/>
            <person name="Chen R."/>
            <person name="Wang J."/>
            <person name="Yu J."/>
            <person name="Yang H."/>
        </authorList>
    </citation>
    <scope>NUCLEOTIDE SEQUENCE [LARGE SCALE GENOMIC DNA]</scope>
    <source>
        <strain>DSM 15242 / JCM 11007 / NBRC 100824 / MB4</strain>
    </source>
</reference>
<keyword id="KW-0001">2Fe-2S</keyword>
<keyword id="KW-0249">Electron transport</keyword>
<keyword id="KW-0274">FAD</keyword>
<keyword id="KW-0285">Flavoprotein</keyword>
<keyword id="KW-0408">Iron</keyword>
<keyword id="KW-0411">Iron-sulfur</keyword>
<keyword id="KW-0479">Metal-binding</keyword>
<keyword id="KW-0665">Pyrimidine biosynthesis</keyword>
<keyword id="KW-1185">Reference proteome</keyword>
<keyword id="KW-0813">Transport</keyword>
<organism>
    <name type="scientific">Caldanaerobacter subterraneus subsp. tengcongensis (strain DSM 15242 / JCM 11007 / NBRC 100824 / MB4)</name>
    <name type="common">Thermoanaerobacter tengcongensis</name>
    <dbReference type="NCBI Taxonomy" id="273068"/>
    <lineage>
        <taxon>Bacteria</taxon>
        <taxon>Bacillati</taxon>
        <taxon>Bacillota</taxon>
        <taxon>Clostridia</taxon>
        <taxon>Thermoanaerobacterales</taxon>
        <taxon>Thermoanaerobacteraceae</taxon>
        <taxon>Caldanaerobacter</taxon>
    </lineage>
</organism>